<gene>
    <name evidence="1" type="primary">gcvPA</name>
    <name type="ordered locus">Plav_0690</name>
</gene>
<proteinExistence type="inferred from homology"/>
<feature type="chain" id="PRO_1000072770" description="Probable glycine dehydrogenase (decarboxylating) subunit 1">
    <location>
        <begin position="1"/>
        <end position="448"/>
    </location>
</feature>
<name>GCSPA_PARL1</name>
<sequence>MRYLPLTENDRREMLGVIGAKSVDELFRDVPERARREGLVDLPRRQGELEVERMLGRMAAKNTPAASVPFFVGAGAYRHHVPAAVDHLIQRSEFLTSYTPYQPEITQGTLQYLFEFQTQVAMITGMEVANASMYDGATGCGEAVLMAHRVTKRRKAVLSGTLHPQYAAVVQNLSDFADYELEVMPPALPGQAEDILAHIHDDISCVVVQTPGFFGELHDLRPIAEAAHAKGALLIAVVPEILSLGAVTPPGEMGADIVVGEGQSIGNGLNFGGPYVGLFATREKYMRQMPGRLCGETVDADGNRGFVLTLSTREQHIRREKATSNICTNSGLCCLAFTIHMSLLGEEGYKRLARINHAAAVKLAERLAKVPGVEILNQAFFNEFTMRLPKPAAEVVDALVDKGVIGGLPASRLLPGVAEVEDLLIVASTEINTEADRAAYEAALKEVL</sequence>
<dbReference type="EC" id="1.4.4.2" evidence="1"/>
<dbReference type="EMBL" id="CP000774">
    <property type="protein sequence ID" value="ABS62313.1"/>
    <property type="molecule type" value="Genomic_DNA"/>
</dbReference>
<dbReference type="RefSeq" id="WP_011995604.1">
    <property type="nucleotide sequence ID" value="NC_009719.1"/>
</dbReference>
<dbReference type="SMR" id="A7HQY0"/>
<dbReference type="STRING" id="402881.Plav_0690"/>
<dbReference type="KEGG" id="pla:Plav_0690"/>
<dbReference type="eggNOG" id="COG0403">
    <property type="taxonomic scope" value="Bacteria"/>
</dbReference>
<dbReference type="HOGENOM" id="CLU_004620_0_2_5"/>
<dbReference type="OrthoDB" id="9801272at2"/>
<dbReference type="Proteomes" id="UP000006377">
    <property type="component" value="Chromosome"/>
</dbReference>
<dbReference type="GO" id="GO:0004375">
    <property type="term" value="F:glycine dehydrogenase (decarboxylating) activity"/>
    <property type="evidence" value="ECO:0007669"/>
    <property type="project" value="UniProtKB-EC"/>
</dbReference>
<dbReference type="GO" id="GO:0019464">
    <property type="term" value="P:glycine decarboxylation via glycine cleavage system"/>
    <property type="evidence" value="ECO:0007669"/>
    <property type="project" value="UniProtKB-UniRule"/>
</dbReference>
<dbReference type="GO" id="GO:0009116">
    <property type="term" value="P:nucleoside metabolic process"/>
    <property type="evidence" value="ECO:0007669"/>
    <property type="project" value="InterPro"/>
</dbReference>
<dbReference type="CDD" id="cd00613">
    <property type="entry name" value="GDC-P"/>
    <property type="match status" value="1"/>
</dbReference>
<dbReference type="Gene3D" id="3.90.1150.10">
    <property type="entry name" value="Aspartate Aminotransferase, domain 1"/>
    <property type="match status" value="1"/>
</dbReference>
<dbReference type="Gene3D" id="3.40.640.10">
    <property type="entry name" value="Type I PLP-dependent aspartate aminotransferase-like (Major domain)"/>
    <property type="match status" value="1"/>
</dbReference>
<dbReference type="HAMAP" id="MF_00712">
    <property type="entry name" value="GcvPA"/>
    <property type="match status" value="1"/>
</dbReference>
<dbReference type="InterPro" id="IPR023010">
    <property type="entry name" value="GcvPA"/>
</dbReference>
<dbReference type="InterPro" id="IPR049315">
    <property type="entry name" value="GDC-P_N"/>
</dbReference>
<dbReference type="InterPro" id="IPR020581">
    <property type="entry name" value="GDC_P"/>
</dbReference>
<dbReference type="InterPro" id="IPR015424">
    <property type="entry name" value="PyrdxlP-dep_Trfase"/>
</dbReference>
<dbReference type="InterPro" id="IPR015421">
    <property type="entry name" value="PyrdxlP-dep_Trfase_major"/>
</dbReference>
<dbReference type="InterPro" id="IPR015422">
    <property type="entry name" value="PyrdxlP-dep_Trfase_small"/>
</dbReference>
<dbReference type="NCBIfam" id="NF001696">
    <property type="entry name" value="PRK00451.1"/>
    <property type="match status" value="1"/>
</dbReference>
<dbReference type="PANTHER" id="PTHR42806">
    <property type="entry name" value="GLYCINE CLEAVAGE SYSTEM P-PROTEIN"/>
    <property type="match status" value="1"/>
</dbReference>
<dbReference type="PANTHER" id="PTHR42806:SF1">
    <property type="entry name" value="GLYCINE DEHYDROGENASE (DECARBOXYLATING)"/>
    <property type="match status" value="1"/>
</dbReference>
<dbReference type="Pfam" id="PF02347">
    <property type="entry name" value="GDC-P"/>
    <property type="match status" value="1"/>
</dbReference>
<dbReference type="PIRSF" id="PIRSF006815">
    <property type="entry name" value="GcvPA"/>
    <property type="match status" value="1"/>
</dbReference>
<dbReference type="SUPFAM" id="SSF53383">
    <property type="entry name" value="PLP-dependent transferases"/>
    <property type="match status" value="1"/>
</dbReference>
<evidence type="ECO:0000255" key="1">
    <source>
        <dbReference type="HAMAP-Rule" id="MF_00712"/>
    </source>
</evidence>
<organism>
    <name type="scientific">Parvibaculum lavamentivorans (strain DS-1 / DSM 13023 / NCIMB 13966)</name>
    <dbReference type="NCBI Taxonomy" id="402881"/>
    <lineage>
        <taxon>Bacteria</taxon>
        <taxon>Pseudomonadati</taxon>
        <taxon>Pseudomonadota</taxon>
        <taxon>Alphaproteobacteria</taxon>
        <taxon>Hyphomicrobiales</taxon>
        <taxon>Parvibaculaceae</taxon>
        <taxon>Parvibaculum</taxon>
    </lineage>
</organism>
<accession>A7HQY0</accession>
<comment type="function">
    <text evidence="1">The glycine cleavage system catalyzes the degradation of glycine. The P protein binds the alpha-amino group of glycine through its pyridoxal phosphate cofactor; CO(2) is released and the remaining methylamine moiety is then transferred to the lipoamide cofactor of the H protein.</text>
</comment>
<comment type="catalytic activity">
    <reaction evidence="1">
        <text>N(6)-[(R)-lipoyl]-L-lysyl-[glycine-cleavage complex H protein] + glycine + H(+) = N(6)-[(R)-S(8)-aminomethyldihydrolipoyl]-L-lysyl-[glycine-cleavage complex H protein] + CO2</text>
        <dbReference type="Rhea" id="RHEA:24304"/>
        <dbReference type="Rhea" id="RHEA-COMP:10494"/>
        <dbReference type="Rhea" id="RHEA-COMP:10495"/>
        <dbReference type="ChEBI" id="CHEBI:15378"/>
        <dbReference type="ChEBI" id="CHEBI:16526"/>
        <dbReference type="ChEBI" id="CHEBI:57305"/>
        <dbReference type="ChEBI" id="CHEBI:83099"/>
        <dbReference type="ChEBI" id="CHEBI:83143"/>
        <dbReference type="EC" id="1.4.4.2"/>
    </reaction>
</comment>
<comment type="subunit">
    <text evidence="1">The glycine cleavage system is composed of four proteins: P, T, L and H. In this organism, the P 'protein' is a heterodimer of two subunits.</text>
</comment>
<comment type="similarity">
    <text evidence="1">Belongs to the GcvP family. N-terminal subunit subfamily.</text>
</comment>
<protein>
    <recommendedName>
        <fullName evidence="1">Probable glycine dehydrogenase (decarboxylating) subunit 1</fullName>
        <ecNumber evidence="1">1.4.4.2</ecNumber>
    </recommendedName>
    <alternativeName>
        <fullName evidence="1">Glycine cleavage system P-protein subunit 1</fullName>
    </alternativeName>
    <alternativeName>
        <fullName evidence="1">Glycine decarboxylase subunit 1</fullName>
    </alternativeName>
    <alternativeName>
        <fullName evidence="1">Glycine dehydrogenase (aminomethyl-transferring) subunit 1</fullName>
    </alternativeName>
</protein>
<keyword id="KW-0560">Oxidoreductase</keyword>
<keyword id="KW-1185">Reference proteome</keyword>
<reference key="1">
    <citation type="journal article" date="2011" name="Stand. Genomic Sci.">
        <title>Complete genome sequence of Parvibaculum lavamentivorans type strain (DS-1(T)).</title>
        <authorList>
            <person name="Schleheck D."/>
            <person name="Weiss M."/>
            <person name="Pitluck S."/>
            <person name="Bruce D."/>
            <person name="Land M.L."/>
            <person name="Han S."/>
            <person name="Saunders E."/>
            <person name="Tapia R."/>
            <person name="Detter C."/>
            <person name="Brettin T."/>
            <person name="Han J."/>
            <person name="Woyke T."/>
            <person name="Goodwin L."/>
            <person name="Pennacchio L."/>
            <person name="Nolan M."/>
            <person name="Cook A.M."/>
            <person name="Kjelleberg S."/>
            <person name="Thomas T."/>
        </authorList>
    </citation>
    <scope>NUCLEOTIDE SEQUENCE [LARGE SCALE GENOMIC DNA]</scope>
    <source>
        <strain>DS-1 / DSM 13023 / NCIMB 13966</strain>
    </source>
</reference>